<dbReference type="EMBL" id="AK033598">
    <property type="protein sequence ID" value="BAC28379.1"/>
    <property type="molecule type" value="mRNA"/>
</dbReference>
<dbReference type="EMBL" id="BC030719">
    <property type="protein sequence ID" value="AAH30719.1"/>
    <property type="molecule type" value="mRNA"/>
</dbReference>
<dbReference type="EMBL" id="BC030720">
    <property type="protein sequence ID" value="AAH30720.1"/>
    <property type="molecule type" value="mRNA"/>
</dbReference>
<dbReference type="EMBL" id="BC033602">
    <property type="protein sequence ID" value="AAH33602.1"/>
    <property type="status" value="ALT_INIT"/>
    <property type="molecule type" value="mRNA"/>
</dbReference>
<dbReference type="CCDS" id="CCDS17176.1">
    <molecule id="Q8K078-1"/>
</dbReference>
<dbReference type="RefSeq" id="NP_001342147.1">
    <molecule id="Q8K078-1"/>
    <property type="nucleotide sequence ID" value="NM_001355218.1"/>
</dbReference>
<dbReference type="RefSeq" id="NP_683735.1">
    <molecule id="Q8K078-1"/>
    <property type="nucleotide sequence ID" value="NM_148933.1"/>
</dbReference>
<dbReference type="RefSeq" id="XP_006500610.1">
    <property type="nucleotide sequence ID" value="XM_006500547.2"/>
</dbReference>
<dbReference type="SMR" id="Q8K078"/>
<dbReference type="BioGRID" id="223841">
    <property type="interactions" value="1"/>
</dbReference>
<dbReference type="FunCoup" id="Q8K078">
    <property type="interactions" value="134"/>
</dbReference>
<dbReference type="IntAct" id="Q8K078">
    <property type="interactions" value="2"/>
</dbReference>
<dbReference type="MINT" id="Q8K078"/>
<dbReference type="STRING" id="10090.ENSMUSP00000045023"/>
<dbReference type="GlyCosmos" id="Q8K078">
    <property type="glycosylation" value="2 sites, No reported glycans"/>
</dbReference>
<dbReference type="GlyGen" id="Q8K078">
    <property type="glycosylation" value="2 sites, 1 N-linked glycan (1 site)"/>
</dbReference>
<dbReference type="iPTMnet" id="Q8K078"/>
<dbReference type="PhosphoSitePlus" id="Q8K078"/>
<dbReference type="SwissPalm" id="Q8K078"/>
<dbReference type="PaxDb" id="10090-ENSMUSP00000045023"/>
<dbReference type="PeptideAtlas" id="Q8K078"/>
<dbReference type="ProteomicsDB" id="261106">
    <molecule id="Q8K078-1"/>
</dbReference>
<dbReference type="ProteomicsDB" id="261107">
    <molecule id="Q8K078-2"/>
</dbReference>
<dbReference type="Antibodypedia" id="29551">
    <property type="antibodies" value="36 antibodies from 14 providers"/>
</dbReference>
<dbReference type="DNASU" id="108115"/>
<dbReference type="Ensembl" id="ENSMUST00000038225.8">
    <molecule id="Q8K078-1"/>
    <property type="protein sequence ID" value="ENSMUSP00000045023.8"/>
    <property type="gene ID" value="ENSMUSG00000038963.16"/>
</dbReference>
<dbReference type="Ensembl" id="ENSMUST00000038259.13">
    <molecule id="Q8K078-1"/>
    <property type="protein sequence ID" value="ENSMUSP00000046502.7"/>
    <property type="gene ID" value="ENSMUSG00000038963.16"/>
</dbReference>
<dbReference type="GeneID" id="108115"/>
<dbReference type="KEGG" id="mmu:108115"/>
<dbReference type="UCSC" id="uc008ojc.2">
    <molecule id="Q8K078-1"/>
    <property type="organism name" value="mouse"/>
</dbReference>
<dbReference type="AGR" id="MGI:1351866"/>
<dbReference type="CTD" id="28231"/>
<dbReference type="MGI" id="MGI:1351866">
    <property type="gene designation" value="Slco4a1"/>
</dbReference>
<dbReference type="VEuPathDB" id="HostDB:ENSMUSG00000038963"/>
<dbReference type="eggNOG" id="KOG3626">
    <property type="taxonomic scope" value="Eukaryota"/>
</dbReference>
<dbReference type="GeneTree" id="ENSGT01130000278287"/>
<dbReference type="HOGENOM" id="CLU_008954_2_0_1"/>
<dbReference type="InParanoid" id="Q8K078"/>
<dbReference type="OMA" id="LLIYTDW"/>
<dbReference type="OrthoDB" id="5062115at2759"/>
<dbReference type="PhylomeDB" id="Q8K078"/>
<dbReference type="TreeFam" id="TF317540"/>
<dbReference type="Reactome" id="R-MMU-879518">
    <property type="pathway name" value="Transport of organic anions"/>
</dbReference>
<dbReference type="BioGRID-ORCS" id="108115">
    <property type="hits" value="5 hits in 79 CRISPR screens"/>
</dbReference>
<dbReference type="ChiTaRS" id="Slco4a1">
    <property type="organism name" value="mouse"/>
</dbReference>
<dbReference type="PRO" id="PR:Q8K078"/>
<dbReference type="Proteomes" id="UP000000589">
    <property type="component" value="Chromosome 2"/>
</dbReference>
<dbReference type="RNAct" id="Q8K078">
    <property type="molecule type" value="protein"/>
</dbReference>
<dbReference type="Bgee" id="ENSMUSG00000038963">
    <property type="expression patterns" value="Expressed in placenta labyrinth and 149 other cell types or tissues"/>
</dbReference>
<dbReference type="GO" id="GO:0005886">
    <property type="term" value="C:plasma membrane"/>
    <property type="evidence" value="ECO:0000266"/>
    <property type="project" value="MGI"/>
</dbReference>
<dbReference type="GO" id="GO:0008514">
    <property type="term" value="F:organic anion transmembrane transporter activity"/>
    <property type="evidence" value="ECO:0000266"/>
    <property type="project" value="MGI"/>
</dbReference>
<dbReference type="GO" id="GO:0015132">
    <property type="term" value="F:prostaglandin transmembrane transporter activity"/>
    <property type="evidence" value="ECO:0000250"/>
    <property type="project" value="UniProtKB"/>
</dbReference>
<dbReference type="GO" id="GO:0006811">
    <property type="term" value="P:monoatomic ion transport"/>
    <property type="evidence" value="ECO:0007669"/>
    <property type="project" value="UniProtKB-KW"/>
</dbReference>
<dbReference type="GO" id="GO:0015711">
    <property type="term" value="P:organic anion transport"/>
    <property type="evidence" value="ECO:0000266"/>
    <property type="project" value="MGI"/>
</dbReference>
<dbReference type="Gene3D" id="1.20.1250.20">
    <property type="entry name" value="MFS general substrate transporter like domains"/>
    <property type="match status" value="1"/>
</dbReference>
<dbReference type="InterPro" id="IPR002350">
    <property type="entry name" value="Kazal_dom"/>
</dbReference>
<dbReference type="InterPro" id="IPR036058">
    <property type="entry name" value="Kazal_dom_sf"/>
</dbReference>
<dbReference type="InterPro" id="IPR020846">
    <property type="entry name" value="MFS_dom"/>
</dbReference>
<dbReference type="InterPro" id="IPR036259">
    <property type="entry name" value="MFS_trans_sf"/>
</dbReference>
<dbReference type="InterPro" id="IPR004156">
    <property type="entry name" value="OATP"/>
</dbReference>
<dbReference type="NCBIfam" id="TIGR00805">
    <property type="entry name" value="oat"/>
    <property type="match status" value="1"/>
</dbReference>
<dbReference type="PANTHER" id="PTHR11388">
    <property type="entry name" value="ORGANIC ANION TRANSPORTER"/>
    <property type="match status" value="1"/>
</dbReference>
<dbReference type="PANTHER" id="PTHR11388:SF100">
    <property type="entry name" value="SOLUTE CARRIER ORGANIC ANION TRANSPORTER FAMILY MEMBER 4A1"/>
    <property type="match status" value="1"/>
</dbReference>
<dbReference type="Pfam" id="PF07648">
    <property type="entry name" value="Kazal_2"/>
    <property type="match status" value="1"/>
</dbReference>
<dbReference type="Pfam" id="PF03137">
    <property type="entry name" value="OATP"/>
    <property type="match status" value="1"/>
</dbReference>
<dbReference type="SUPFAM" id="SSF100895">
    <property type="entry name" value="Kazal-type serine protease inhibitors"/>
    <property type="match status" value="1"/>
</dbReference>
<dbReference type="SUPFAM" id="SSF103473">
    <property type="entry name" value="MFS general substrate transporter"/>
    <property type="match status" value="2"/>
</dbReference>
<dbReference type="PROSITE" id="PS51465">
    <property type="entry name" value="KAZAL_2"/>
    <property type="match status" value="1"/>
</dbReference>
<dbReference type="PROSITE" id="PS50850">
    <property type="entry name" value="MFS"/>
    <property type="match status" value="1"/>
</dbReference>
<feature type="chain" id="PRO_0000191068" description="Solute carrier organic anion transporter family member 4A1">
    <location>
        <begin position="1"/>
        <end position="723"/>
    </location>
</feature>
<feature type="topological domain" description="Cytoplasmic" evidence="2">
    <location>
        <begin position="1"/>
        <end position="102"/>
    </location>
</feature>
<feature type="transmembrane region" description="Helical; Name=1" evidence="2">
    <location>
        <begin position="103"/>
        <end position="123"/>
    </location>
</feature>
<feature type="topological domain" description="Extracellular" evidence="2">
    <location>
        <begin position="124"/>
        <end position="142"/>
    </location>
</feature>
<feature type="transmembrane region" description="Helical; Name=2" evidence="2">
    <location>
        <begin position="143"/>
        <end position="163"/>
    </location>
</feature>
<feature type="topological domain" description="Cytoplasmic" evidence="2">
    <location>
        <begin position="164"/>
        <end position="169"/>
    </location>
</feature>
<feature type="transmembrane region" description="Helical; Name=3" evidence="2">
    <location>
        <begin position="170"/>
        <end position="194"/>
    </location>
</feature>
<feature type="topological domain" description="Extracellular" evidence="2">
    <location>
        <begin position="195"/>
        <end position="224"/>
    </location>
</feature>
<feature type="transmembrane region" description="Helical; Name=4" evidence="2">
    <location>
        <begin position="225"/>
        <end position="255"/>
    </location>
</feature>
<feature type="topological domain" description="Cytoplasmic" evidence="2">
    <location>
        <begin position="256"/>
        <end position="274"/>
    </location>
</feature>
<feature type="transmembrane region" description="Helical; Name=5" evidence="2">
    <location>
        <begin position="275"/>
        <end position="295"/>
    </location>
</feature>
<feature type="topological domain" description="Extracellular" evidence="2">
    <location>
        <begin position="296"/>
        <end position="309"/>
    </location>
</feature>
<feature type="transmembrane region" description="Helical; Name=6" evidence="2">
    <location>
        <begin position="310"/>
        <end position="334"/>
    </location>
</feature>
<feature type="topological domain" description="Cytoplasmic" evidence="2">
    <location>
        <begin position="335"/>
        <end position="380"/>
    </location>
</feature>
<feature type="transmembrane region" description="Helical; Name=7" evidence="2">
    <location>
        <begin position="381"/>
        <end position="402"/>
    </location>
</feature>
<feature type="topological domain" description="Extracellular" evidence="2">
    <location>
        <begin position="403"/>
        <end position="422"/>
    </location>
</feature>
<feature type="transmembrane region" description="Helical; Name=8" evidence="2">
    <location>
        <begin position="423"/>
        <end position="446"/>
    </location>
</feature>
<feature type="topological domain" description="Cytoplasmic" evidence="2">
    <location>
        <begin position="447"/>
        <end position="450"/>
    </location>
</feature>
<feature type="transmembrane region" description="Helical; Name=9" evidence="2">
    <location>
        <begin position="451"/>
        <end position="473"/>
    </location>
</feature>
<feature type="topological domain" description="Extracellular" evidence="2">
    <location>
        <begin position="474"/>
        <end position="582"/>
    </location>
</feature>
<feature type="transmembrane region" description="Helical; Name=10" evidence="2">
    <location>
        <begin position="583"/>
        <end position="605"/>
    </location>
</feature>
<feature type="topological domain" description="Cytoplasmic" evidence="2">
    <location>
        <begin position="606"/>
        <end position="614"/>
    </location>
</feature>
<feature type="transmembrane region" description="Helical; Name=11" evidence="2">
    <location>
        <begin position="615"/>
        <end position="640"/>
    </location>
</feature>
<feature type="topological domain" description="Extracellular" evidence="2">
    <location>
        <begin position="641"/>
        <end position="673"/>
    </location>
</feature>
<feature type="transmembrane region" description="Helical; Name=12" evidence="2">
    <location>
        <begin position="674"/>
        <end position="691"/>
    </location>
</feature>
<feature type="topological domain" description="Cytoplasmic" evidence="2">
    <location>
        <begin position="692"/>
        <end position="723"/>
    </location>
</feature>
<feature type="domain" description="Kazal-like" evidence="3">
    <location>
        <begin position="500"/>
        <end position="557"/>
    </location>
</feature>
<feature type="region of interest" description="Disordered" evidence="4">
    <location>
        <begin position="23"/>
        <end position="64"/>
    </location>
</feature>
<feature type="region of interest" description="Disordered" evidence="4">
    <location>
        <begin position="700"/>
        <end position="723"/>
    </location>
</feature>
<feature type="compositionally biased region" description="Low complexity" evidence="4">
    <location>
        <begin position="33"/>
        <end position="46"/>
    </location>
</feature>
<feature type="compositionally biased region" description="Low complexity" evidence="4">
    <location>
        <begin position="701"/>
        <end position="723"/>
    </location>
</feature>
<feature type="modified residue" description="Phosphoserine" evidence="1">
    <location>
        <position position="39"/>
    </location>
</feature>
<feature type="modified residue" description="Phosphoserine" evidence="1">
    <location>
        <position position="42"/>
    </location>
</feature>
<feature type="modified residue" description="Phosphoserine" evidence="1">
    <location>
        <position position="45"/>
    </location>
</feature>
<feature type="glycosylation site" description="N-linked (GlcNAc...) asparagine" evidence="2">
    <location>
        <position position="212"/>
    </location>
</feature>
<feature type="glycosylation site" description="N-linked (GlcNAc...) asparagine" evidence="2">
    <location>
        <position position="566"/>
    </location>
</feature>
<feature type="disulfide bond" evidence="3">
    <location>
        <begin position="506"/>
        <end position="536"/>
    </location>
</feature>
<feature type="disulfide bond" evidence="3">
    <location>
        <begin position="521"/>
        <end position="555"/>
    </location>
</feature>
<feature type="splice variant" id="VSP_006157" description="In isoform 2." evidence="5">
    <original>SIPG</original>
    <variation>TAWG</variation>
    <location>
        <begin position="629"/>
        <end position="632"/>
    </location>
</feature>
<feature type="splice variant" id="VSP_006158" description="In isoform 2." evidence="5">
    <location>
        <begin position="633"/>
        <end position="723"/>
    </location>
</feature>
<feature type="sequence conflict" description="In Ref. 1; BAC28379." evidence="6" ref="1">
    <original>S</original>
    <variation>R</variation>
    <location>
        <position position="28"/>
    </location>
</feature>
<accession>Q8K078</accession>
<accession>Q8BZT4</accession>
<gene>
    <name type="primary">Slco4a1</name>
    <name type="synonym">Oatp4a1</name>
    <name type="synonym">Oatpe</name>
    <name type="synonym">Slc21a12</name>
</gene>
<protein>
    <recommendedName>
        <fullName>Solute carrier organic anion transporter family member 4A1</fullName>
    </recommendedName>
    <alternativeName>
        <fullName>Organic anion-transporting polypeptide E</fullName>
        <shortName>OATP-E</shortName>
    </alternativeName>
    <alternativeName>
        <fullName>Sodium-independent organic anion transporter E</fullName>
    </alternativeName>
    <alternativeName>
        <fullName>Solute carrier family 21 member 12</fullName>
    </alternativeName>
</protein>
<organism>
    <name type="scientific">Mus musculus</name>
    <name type="common">Mouse</name>
    <dbReference type="NCBI Taxonomy" id="10090"/>
    <lineage>
        <taxon>Eukaryota</taxon>
        <taxon>Metazoa</taxon>
        <taxon>Chordata</taxon>
        <taxon>Craniata</taxon>
        <taxon>Vertebrata</taxon>
        <taxon>Euteleostomi</taxon>
        <taxon>Mammalia</taxon>
        <taxon>Eutheria</taxon>
        <taxon>Euarchontoglires</taxon>
        <taxon>Glires</taxon>
        <taxon>Rodentia</taxon>
        <taxon>Myomorpha</taxon>
        <taxon>Muroidea</taxon>
        <taxon>Muridae</taxon>
        <taxon>Murinae</taxon>
        <taxon>Mus</taxon>
        <taxon>Mus</taxon>
    </lineage>
</organism>
<name>SO4A1_MOUSE</name>
<reference key="1">
    <citation type="journal article" date="2005" name="Science">
        <title>The transcriptional landscape of the mammalian genome.</title>
        <authorList>
            <person name="Carninci P."/>
            <person name="Kasukawa T."/>
            <person name="Katayama S."/>
            <person name="Gough J."/>
            <person name="Frith M.C."/>
            <person name="Maeda N."/>
            <person name="Oyama R."/>
            <person name="Ravasi T."/>
            <person name="Lenhard B."/>
            <person name="Wells C."/>
            <person name="Kodzius R."/>
            <person name="Shimokawa K."/>
            <person name="Bajic V.B."/>
            <person name="Brenner S.E."/>
            <person name="Batalov S."/>
            <person name="Forrest A.R."/>
            <person name="Zavolan M."/>
            <person name="Davis M.J."/>
            <person name="Wilming L.G."/>
            <person name="Aidinis V."/>
            <person name="Allen J.E."/>
            <person name="Ambesi-Impiombato A."/>
            <person name="Apweiler R."/>
            <person name="Aturaliya R.N."/>
            <person name="Bailey T.L."/>
            <person name="Bansal M."/>
            <person name="Baxter L."/>
            <person name="Beisel K.W."/>
            <person name="Bersano T."/>
            <person name="Bono H."/>
            <person name="Chalk A.M."/>
            <person name="Chiu K.P."/>
            <person name="Choudhary V."/>
            <person name="Christoffels A."/>
            <person name="Clutterbuck D.R."/>
            <person name="Crowe M.L."/>
            <person name="Dalla E."/>
            <person name="Dalrymple B.P."/>
            <person name="de Bono B."/>
            <person name="Della Gatta G."/>
            <person name="di Bernardo D."/>
            <person name="Down T."/>
            <person name="Engstrom P."/>
            <person name="Fagiolini M."/>
            <person name="Faulkner G."/>
            <person name="Fletcher C.F."/>
            <person name="Fukushima T."/>
            <person name="Furuno M."/>
            <person name="Futaki S."/>
            <person name="Gariboldi M."/>
            <person name="Georgii-Hemming P."/>
            <person name="Gingeras T.R."/>
            <person name="Gojobori T."/>
            <person name="Green R.E."/>
            <person name="Gustincich S."/>
            <person name="Harbers M."/>
            <person name="Hayashi Y."/>
            <person name="Hensch T.K."/>
            <person name="Hirokawa N."/>
            <person name="Hill D."/>
            <person name="Huminiecki L."/>
            <person name="Iacono M."/>
            <person name="Ikeo K."/>
            <person name="Iwama A."/>
            <person name="Ishikawa T."/>
            <person name="Jakt M."/>
            <person name="Kanapin A."/>
            <person name="Katoh M."/>
            <person name="Kawasawa Y."/>
            <person name="Kelso J."/>
            <person name="Kitamura H."/>
            <person name="Kitano H."/>
            <person name="Kollias G."/>
            <person name="Krishnan S.P."/>
            <person name="Kruger A."/>
            <person name="Kummerfeld S.K."/>
            <person name="Kurochkin I.V."/>
            <person name="Lareau L.F."/>
            <person name="Lazarevic D."/>
            <person name="Lipovich L."/>
            <person name="Liu J."/>
            <person name="Liuni S."/>
            <person name="McWilliam S."/>
            <person name="Madan Babu M."/>
            <person name="Madera M."/>
            <person name="Marchionni L."/>
            <person name="Matsuda H."/>
            <person name="Matsuzawa S."/>
            <person name="Miki H."/>
            <person name="Mignone F."/>
            <person name="Miyake S."/>
            <person name="Morris K."/>
            <person name="Mottagui-Tabar S."/>
            <person name="Mulder N."/>
            <person name="Nakano N."/>
            <person name="Nakauchi H."/>
            <person name="Ng P."/>
            <person name="Nilsson R."/>
            <person name="Nishiguchi S."/>
            <person name="Nishikawa S."/>
            <person name="Nori F."/>
            <person name="Ohara O."/>
            <person name="Okazaki Y."/>
            <person name="Orlando V."/>
            <person name="Pang K.C."/>
            <person name="Pavan W.J."/>
            <person name="Pavesi G."/>
            <person name="Pesole G."/>
            <person name="Petrovsky N."/>
            <person name="Piazza S."/>
            <person name="Reed J."/>
            <person name="Reid J.F."/>
            <person name="Ring B.Z."/>
            <person name="Ringwald M."/>
            <person name="Rost B."/>
            <person name="Ruan Y."/>
            <person name="Salzberg S.L."/>
            <person name="Sandelin A."/>
            <person name="Schneider C."/>
            <person name="Schoenbach C."/>
            <person name="Sekiguchi K."/>
            <person name="Semple C.A."/>
            <person name="Seno S."/>
            <person name="Sessa L."/>
            <person name="Sheng Y."/>
            <person name="Shibata Y."/>
            <person name="Shimada H."/>
            <person name="Shimada K."/>
            <person name="Silva D."/>
            <person name="Sinclair B."/>
            <person name="Sperling S."/>
            <person name="Stupka E."/>
            <person name="Sugiura K."/>
            <person name="Sultana R."/>
            <person name="Takenaka Y."/>
            <person name="Taki K."/>
            <person name="Tammoja K."/>
            <person name="Tan S.L."/>
            <person name="Tang S."/>
            <person name="Taylor M.S."/>
            <person name="Tegner J."/>
            <person name="Teichmann S.A."/>
            <person name="Ueda H.R."/>
            <person name="van Nimwegen E."/>
            <person name="Verardo R."/>
            <person name="Wei C.L."/>
            <person name="Yagi K."/>
            <person name="Yamanishi H."/>
            <person name="Zabarovsky E."/>
            <person name="Zhu S."/>
            <person name="Zimmer A."/>
            <person name="Hide W."/>
            <person name="Bult C."/>
            <person name="Grimmond S.M."/>
            <person name="Teasdale R.D."/>
            <person name="Liu E.T."/>
            <person name="Brusic V."/>
            <person name="Quackenbush J."/>
            <person name="Wahlestedt C."/>
            <person name="Mattick J.S."/>
            <person name="Hume D.A."/>
            <person name="Kai C."/>
            <person name="Sasaki D."/>
            <person name="Tomaru Y."/>
            <person name="Fukuda S."/>
            <person name="Kanamori-Katayama M."/>
            <person name="Suzuki M."/>
            <person name="Aoki J."/>
            <person name="Arakawa T."/>
            <person name="Iida J."/>
            <person name="Imamura K."/>
            <person name="Itoh M."/>
            <person name="Kato T."/>
            <person name="Kawaji H."/>
            <person name="Kawagashira N."/>
            <person name="Kawashima T."/>
            <person name="Kojima M."/>
            <person name="Kondo S."/>
            <person name="Konno H."/>
            <person name="Nakano K."/>
            <person name="Ninomiya N."/>
            <person name="Nishio T."/>
            <person name="Okada M."/>
            <person name="Plessy C."/>
            <person name="Shibata K."/>
            <person name="Shiraki T."/>
            <person name="Suzuki S."/>
            <person name="Tagami M."/>
            <person name="Waki K."/>
            <person name="Watahiki A."/>
            <person name="Okamura-Oho Y."/>
            <person name="Suzuki H."/>
            <person name="Kawai J."/>
            <person name="Hayashizaki Y."/>
        </authorList>
    </citation>
    <scope>NUCLEOTIDE SEQUENCE [LARGE SCALE MRNA] (ISOFORM 1)</scope>
    <source>
        <strain>C57BL/6J</strain>
        <tissue>Cecum</tissue>
    </source>
</reference>
<reference key="2">
    <citation type="journal article" date="2004" name="Genome Res.">
        <title>The status, quality, and expansion of the NIH full-length cDNA project: the Mammalian Gene Collection (MGC).</title>
        <authorList>
            <consortium name="The MGC Project Team"/>
        </authorList>
    </citation>
    <scope>NUCLEOTIDE SEQUENCE [LARGE SCALE MRNA] (ISOFORMS 1 AND 2)</scope>
    <source>
        <strain>C57BL/6J</strain>
        <tissue>Retina</tissue>
    </source>
</reference>
<reference key="3">
    <citation type="journal article" date="2009" name="Immunity">
        <title>The phagosomal proteome in interferon-gamma-activated macrophages.</title>
        <authorList>
            <person name="Trost M."/>
            <person name="English L."/>
            <person name="Lemieux S."/>
            <person name="Courcelles M."/>
            <person name="Desjardins M."/>
            <person name="Thibault P."/>
        </authorList>
    </citation>
    <scope>IDENTIFICATION BY MASS SPECTROMETRY [LARGE SCALE ANALYSIS]</scope>
</reference>
<comment type="function">
    <text evidence="1 6">Organic anion antiporter with apparent broad substrate specificity. Recognizes various substrates including thyroid hormones 3,3',5-triiodo-L-thyronine (T3), L-thyroxine (T4) and 3,3',5'-triiodo-L-thyronine (rT3), conjugated steroids such as estrone 3-sulfate and estradiol 17-beta glucuronide, bile acids such as taurocholate and prostanoids such as prostaglandin E2, likely operating in a tissue-specific manner (By similarity). May be involved in uptake of metabolites from the circulation into organs such as kidney, liver or placenta. Possibly drives the selective transport of thyroid hormones and estrogens coupled to an outward glutamate gradient across the microvillous membrane of the placenta (By similarity). The transport mechanism, its electrogenicity and potential tissue-specific counterions remain to be elucidated (Probable).</text>
</comment>
<comment type="catalytic activity">
    <reaction evidence="1">
        <text>3,3',5-triiodo-L-thyronine(out) + L-glutamate(in) = 3,3',5-triiodo-L-thyronine(in) + L-glutamate(out)</text>
        <dbReference type="Rhea" id="RHEA:72299"/>
        <dbReference type="ChEBI" id="CHEBI:29985"/>
        <dbReference type="ChEBI" id="CHEBI:533015"/>
    </reaction>
    <physiologicalReaction direction="left-to-right" evidence="1">
        <dbReference type="Rhea" id="RHEA:72300"/>
    </physiologicalReaction>
</comment>
<comment type="catalytic activity">
    <reaction evidence="1">
        <text>L-thyroxine(out) + L-glutamate(in) = L-thyroxine(in) + L-glutamate(out)</text>
        <dbReference type="Rhea" id="RHEA:72303"/>
        <dbReference type="ChEBI" id="CHEBI:29985"/>
        <dbReference type="ChEBI" id="CHEBI:58448"/>
    </reaction>
    <physiologicalReaction direction="left-to-right" evidence="1">
        <dbReference type="Rhea" id="RHEA:72304"/>
    </physiologicalReaction>
</comment>
<comment type="catalytic activity">
    <reaction evidence="1">
        <text>estrone 3-sulfate(out) + L-glutamate(in) = estrone 3-sulfate(in) + L-glutamate(out)</text>
        <dbReference type="Rhea" id="RHEA:72239"/>
        <dbReference type="ChEBI" id="CHEBI:29985"/>
        <dbReference type="ChEBI" id="CHEBI:60050"/>
    </reaction>
    <physiologicalReaction direction="left-to-right" evidence="1">
        <dbReference type="Rhea" id="RHEA:72240"/>
    </physiologicalReaction>
</comment>
<comment type="catalytic activity">
    <reaction evidence="1">
        <text>taurocholate(out) + L-glutamate(in) = taurocholate(in) + L-glutamate(out)</text>
        <dbReference type="Rhea" id="RHEA:72307"/>
        <dbReference type="ChEBI" id="CHEBI:29985"/>
        <dbReference type="ChEBI" id="CHEBI:36257"/>
    </reaction>
    <physiologicalReaction direction="left-to-right" evidence="1">
        <dbReference type="Rhea" id="RHEA:72308"/>
    </physiologicalReaction>
</comment>
<comment type="catalytic activity">
    <reaction evidence="1">
        <text>3,3',5-triiodo-L-thyronine(out) = 3,3',5-triiodo-L-thyronine(in)</text>
        <dbReference type="Rhea" id="RHEA:71811"/>
        <dbReference type="ChEBI" id="CHEBI:533015"/>
    </reaction>
    <physiologicalReaction direction="left-to-right" evidence="1">
        <dbReference type="Rhea" id="RHEA:71812"/>
    </physiologicalReaction>
</comment>
<comment type="catalytic activity">
    <reaction evidence="1">
        <text>L-thyroxine(out) = L-thyroxine(in)</text>
        <dbReference type="Rhea" id="RHEA:71819"/>
        <dbReference type="ChEBI" id="CHEBI:58448"/>
    </reaction>
    <physiologicalReaction direction="left-to-right" evidence="1">
        <dbReference type="Rhea" id="RHEA:71820"/>
    </physiologicalReaction>
</comment>
<comment type="catalytic activity">
    <reaction evidence="1">
        <text>3,3',5'-triiodo-L-thyronine(out) = 3,3',5'-triiodo-L-thyronine(in)</text>
        <dbReference type="Rhea" id="RHEA:71815"/>
        <dbReference type="ChEBI" id="CHEBI:57261"/>
    </reaction>
    <physiologicalReaction direction="left-to-right" evidence="1">
        <dbReference type="Rhea" id="RHEA:71816"/>
    </physiologicalReaction>
</comment>
<comment type="catalytic activity">
    <reaction evidence="1">
        <text>estrone 3-sulfate(out) = estrone 3-sulfate(in)</text>
        <dbReference type="Rhea" id="RHEA:71835"/>
        <dbReference type="ChEBI" id="CHEBI:60050"/>
    </reaction>
    <physiologicalReaction direction="left-to-right" evidence="1">
        <dbReference type="Rhea" id="RHEA:71836"/>
    </physiologicalReaction>
</comment>
<comment type="catalytic activity">
    <reaction evidence="1">
        <text>17beta-estradiol 17-O-(beta-D-glucuronate)(out) = 17beta-estradiol 17-O-(beta-D-glucuronate)(in)</text>
        <dbReference type="Rhea" id="RHEA:72691"/>
        <dbReference type="ChEBI" id="CHEBI:82961"/>
    </reaction>
    <physiologicalReaction direction="left-to-right" evidence="1">
        <dbReference type="Rhea" id="RHEA:72692"/>
    </physiologicalReaction>
</comment>
<comment type="catalytic activity">
    <reaction evidence="1">
        <text>taurocholate(out) = taurocholate(in)</text>
        <dbReference type="Rhea" id="RHEA:71703"/>
        <dbReference type="ChEBI" id="CHEBI:36257"/>
    </reaction>
    <physiologicalReaction direction="left-to-right" evidence="1">
        <dbReference type="Rhea" id="RHEA:71704"/>
    </physiologicalReaction>
</comment>
<comment type="catalytic activity">
    <reaction evidence="1">
        <text>prostaglandin E2(out) = prostaglandin E2(in)</text>
        <dbReference type="Rhea" id="RHEA:50984"/>
        <dbReference type="ChEBI" id="CHEBI:606564"/>
    </reaction>
    <physiologicalReaction direction="left-to-right" evidence="1">
        <dbReference type="Rhea" id="RHEA:50985"/>
    </physiologicalReaction>
</comment>
<comment type="subcellular location">
    <subcellularLocation>
        <location evidence="1">Cell membrane</location>
        <topology evidence="2">Multi-pass membrane protein</topology>
    </subcellularLocation>
</comment>
<comment type="alternative products">
    <event type="alternative splicing"/>
    <isoform>
        <id>Q8K078-1</id>
        <name>1</name>
        <sequence type="displayed"/>
    </isoform>
    <isoform>
        <id>Q8K078-2</id>
        <name>2</name>
        <sequence type="described" ref="VSP_006157 VSP_006158"/>
    </isoform>
</comment>
<comment type="domain">
    <text evidence="1">A conserved histidine residue in the third TMD (His-190) may play an essential role in the pH sensitivity of SLCO4A1/OATP4A1-mediated substrate transport.</text>
</comment>
<comment type="similarity">
    <text evidence="6">Belongs to the organo anion transporter (TC 2.A.60) family.</text>
</comment>
<comment type="sequence caution" evidence="6">
    <conflict type="erroneous initiation">
        <sequence resource="EMBL-CDS" id="AAH33602"/>
    </conflict>
</comment>
<sequence>MPQHAMGDTHFLSLPKHLFTSTSSATDSGCDTPPSSRASPASLRSAHGTLGSSSQPLFEPQAEKRSSQTAREVQYVSSGPQNSLCGWQAFTPKCLQVFNTPKGFLFFLCAASFLQGMTVNGFINTVITSIERRFDLHSYQSGLIASSYDIAACLCLTFVSYFGGNGHKPRWLGWGVLVLGIGSLVFALPHFTAGRYEVEMDEGLGTGTCLTNQSHVECKDSASGLSNYRLIFMLGQLLHGVGATPLYTLGVTYLDENVKSSYSPIYIAIFYTAAILGPAAGYLIGGAMLNVYTEVGQRTELTTDSPLWVGAWWIGFLGTGIAAFLIAIPILGYPRQLPGSQRYVVMRAAETQQLKDHSRGAVSNPAFGKTVRDLPLSIWLLLRNPTFILLCLAGATEATLIAGMSTFGPKFFEAQFSLSASEAATLFGYLVVPAGGGGTLLGGFLVNKFKLRGSGIIRFCLFCTLTSLLAFFVFLMHCPNVHMAGVTTGYVGSLLPKGQLDLKAACNAIYCCQPKHYSPLCGSDGTMYYSPCYAGCPADAETDLGGQKVYRGCSCILEKASSGWGNATAGKCASTCQSKPFLLVLVFVVIIFTFLSSIPALTATLRCVSDRQRSFALGIQWIVVRTLGSIPGPIAFGWVIDKACLLWQDQCGHQGSCFVYENEAMSRYMLIAGLTFKVLGFLFFVAAYFLYKSPSVSSDGLEASLPSQSSASDSPTEQLQSNV</sequence>
<proteinExistence type="evidence at protein level"/>
<evidence type="ECO:0000250" key="1">
    <source>
        <dbReference type="UniProtKB" id="Q96BD0"/>
    </source>
</evidence>
<evidence type="ECO:0000255" key="2"/>
<evidence type="ECO:0000255" key="3">
    <source>
        <dbReference type="PROSITE-ProRule" id="PRU00798"/>
    </source>
</evidence>
<evidence type="ECO:0000256" key="4">
    <source>
        <dbReference type="SAM" id="MobiDB-lite"/>
    </source>
</evidence>
<evidence type="ECO:0000303" key="5">
    <source>
    </source>
</evidence>
<evidence type="ECO:0000305" key="6"/>
<keyword id="KW-0025">Alternative splicing</keyword>
<keyword id="KW-1003">Cell membrane</keyword>
<keyword id="KW-1015">Disulfide bond</keyword>
<keyword id="KW-0325">Glycoprotein</keyword>
<keyword id="KW-0406">Ion transport</keyword>
<keyword id="KW-0472">Membrane</keyword>
<keyword id="KW-0597">Phosphoprotein</keyword>
<keyword id="KW-1185">Reference proteome</keyword>
<keyword id="KW-0812">Transmembrane</keyword>
<keyword id="KW-1133">Transmembrane helix</keyword>
<keyword id="KW-0813">Transport</keyword>